<reference key="1">
    <citation type="journal article" date="1997" name="Gene">
        <title>Structure, chromosomal localization and expression of mouse genes encoding type III Reg, RegIII alpha, RegIII beta, RegIII gamma.</title>
        <authorList>
            <person name="Narushima Y."/>
            <person name="Unno M."/>
            <person name="Nakagawara K."/>
            <person name="Mori M."/>
            <person name="Miyashita H."/>
            <person name="Suzuki Y."/>
            <person name="Noguchi N."/>
            <person name="Takasawa S."/>
            <person name="Kumagai T."/>
            <person name="Yonekura H."/>
            <person name="Okamoto H."/>
        </authorList>
    </citation>
    <scope>NUCLEOTIDE SEQUENCE [GENOMIC DNA / MRNA]</scope>
    <source>
        <strain>C57BL/6J</strain>
        <tissue>Liver</tissue>
        <tissue>Pancreas</tissue>
    </source>
</reference>
<reference key="2">
    <citation type="journal article" date="2010" name="Cell">
        <title>A tissue-specific atlas of mouse protein phosphorylation and expression.</title>
        <authorList>
            <person name="Huttlin E.L."/>
            <person name="Jedrychowski M.P."/>
            <person name="Elias J.E."/>
            <person name="Goswami T."/>
            <person name="Rad R."/>
            <person name="Beausoleil S.A."/>
            <person name="Villen J."/>
            <person name="Haas W."/>
            <person name="Sowa M.E."/>
            <person name="Gygi S.P."/>
        </authorList>
    </citation>
    <scope>IDENTIFICATION BY MASS SPECTROMETRY [LARGE SCALE ANALYSIS]</scope>
    <source>
        <tissue>Pancreas</tissue>
    </source>
</reference>
<reference key="3">
    <citation type="journal article" date="2010" name="Proc. Natl. Acad. Sci. U.S.A.">
        <title>Molecular basis for peptidoglycan recognition by a bactericidal lectin.</title>
        <authorList>
            <person name="Lehotzky R.E."/>
            <person name="Partch C.L."/>
            <person name="Mukherjee S."/>
            <person name="Cash H.L."/>
            <person name="Goldman W.E."/>
            <person name="Gardner K.H."/>
            <person name="Hooper L.V."/>
        </authorList>
    </citation>
    <scope>ABSENCE OF PEPTIDOGLYCAN BINDING</scope>
</reference>
<reference key="4">
    <citation type="journal article" date="2012" name="Immunity">
        <title>The antimicrobial protein REG3A regulates keratinocyte proliferation and differentiation after skin injury.</title>
        <authorList>
            <person name="Lai Y."/>
            <person name="Li D."/>
            <person name="Li C."/>
            <person name="Muehleisen B."/>
            <person name="Radek K.A."/>
            <person name="Park H.J."/>
            <person name="Jiang Z."/>
            <person name="Li Z."/>
            <person name="Lei H."/>
            <person name="Quan Y."/>
            <person name="Zhang T."/>
            <person name="Wu Y."/>
            <person name="Kotol P."/>
            <person name="Morizane S."/>
            <person name="Hata T.R."/>
            <person name="Iwatsuki K."/>
            <person name="Tang C."/>
            <person name="Gallo R.L."/>
        </authorList>
    </citation>
    <scope>FUNCTION</scope>
    <scope>INDUCTION</scope>
</reference>
<reference key="5">
    <citation type="journal article" date="2022" name="Cell Metab.">
        <title>BefA, a microbiota-secreted membrane disrupter, disseminates to the pancreas and increases beta cell mass.</title>
        <authorList>
            <person name="Hill J.H."/>
            <person name="Massaquoi M.S."/>
            <person name="Sweeney E.G."/>
            <person name="Wall E.S."/>
            <person name="Jahl P."/>
            <person name="Bell R."/>
            <person name="Kallio K."/>
            <person name="Derrick D."/>
            <person name="Murtaugh L.C."/>
            <person name="Parthasarathy R."/>
            <person name="Remington S.J."/>
            <person name="Round J.L."/>
            <person name="Guillemin K."/>
        </authorList>
    </citation>
    <scope>FUNCTION</scope>
</reference>
<protein>
    <recommendedName>
        <fullName>Regenerating islet-derived protein 3-alpha</fullName>
        <shortName>REG-3-alpha</shortName>
    </recommendedName>
    <alternativeName>
        <fullName>Islet of Langerhans regenerating protein 3</fullName>
    </alternativeName>
    <alternativeName>
        <fullName>Lithostathine 3</fullName>
    </alternativeName>
    <alternativeName>
        <fullName>Pancreatitis-associated protein 2</fullName>
    </alternativeName>
    <alternativeName>
        <fullName>Regenerating islet-derived protein III-alpha</fullName>
        <shortName>Reg III-alpha</shortName>
    </alternativeName>
    <component>
        <recommendedName>
            <fullName>Regenerating islet-derived protein 3-alpha 16.5 kDa form</fullName>
        </recommendedName>
    </component>
    <component>
        <recommendedName>
            <fullName>Regenerating islet-derived protein 3-alpha 15 kDa form</fullName>
        </recommendedName>
    </component>
</protein>
<name>REG3A_MOUSE</name>
<keyword id="KW-0011">Acute phase</keyword>
<keyword id="KW-0929">Antimicrobial</keyword>
<keyword id="KW-1015">Disulfide bond</keyword>
<keyword id="KW-0395">Inflammatory response</keyword>
<keyword id="KW-0430">Lectin</keyword>
<keyword id="KW-0479">Metal-binding</keyword>
<keyword id="KW-1185">Reference proteome</keyword>
<keyword id="KW-0964">Secreted</keyword>
<keyword id="KW-0732">Signal</keyword>
<keyword id="KW-0862">Zinc</keyword>
<feature type="signal peptide" evidence="1">
    <location>
        <begin position="1"/>
        <end position="26"/>
    </location>
</feature>
<feature type="chain" id="PRO_0000017430" description="Regenerating islet-derived protein 3-alpha 16.5 kDa form">
    <location>
        <begin position="27"/>
        <end position="175"/>
    </location>
</feature>
<feature type="propeptide" id="PRO_0000422743" evidence="1">
    <location>
        <begin position="27"/>
        <end position="37"/>
    </location>
</feature>
<feature type="chain" id="PRO_0000422744" description="Regenerating islet-derived protein 3-alpha 15 kDa form">
    <location>
        <begin position="38"/>
        <end position="175"/>
    </location>
</feature>
<feature type="domain" description="C-type lectin" evidence="3">
    <location>
        <begin position="47"/>
        <end position="172"/>
    </location>
</feature>
<feature type="region of interest" description="Sufficient to activate EXTL3" evidence="2">
    <location>
        <begin position="103"/>
        <end position="118"/>
    </location>
</feature>
<feature type="binding site" evidence="2">
    <location>
        <position position="50"/>
    </location>
    <ligand>
        <name>Zn(2+)</name>
        <dbReference type="ChEBI" id="CHEBI:29105"/>
    </ligand>
</feature>
<feature type="binding site" evidence="2">
    <location>
        <position position="107"/>
    </location>
    <ligand>
        <name>Zn(2+)</name>
        <dbReference type="ChEBI" id="CHEBI:29105"/>
    </ligand>
</feature>
<feature type="binding site" evidence="2">
    <location>
        <position position="121"/>
    </location>
    <ligand>
        <name>Zn(2+)</name>
        <dbReference type="ChEBI" id="CHEBI:29105"/>
    </ligand>
</feature>
<feature type="binding site" evidence="2">
    <location>
        <position position="145"/>
    </location>
    <ligand>
        <name>Zn(2+)</name>
        <dbReference type="ChEBI" id="CHEBI:29105"/>
    </ligand>
</feature>
<feature type="disulfide bond" evidence="3">
    <location>
        <begin position="40"/>
        <end position="51"/>
    </location>
</feature>
<feature type="disulfide bond" evidence="3">
    <location>
        <begin position="68"/>
        <end position="171"/>
    </location>
</feature>
<feature type="disulfide bond" evidence="3">
    <location>
        <begin position="146"/>
        <end position="163"/>
    </location>
</feature>
<comment type="function">
    <text evidence="4">Bactericidal C-type lectin. The lack of the EPN motif may explain its inability to bind peptidoglycan.</text>
</comment>
<comment type="function">
    <text evidence="2 5 6">Acts as a hormone in response to different stimuli like anti-inflammatory signals, such as IL17A, or gut microbiome. Secreted by different cell types to activate its receptor EXTL3 and induce cell specific signaling pathways. Induced by IL17A in keratinocytes, regulates keratinocyte proliferation and differentiation after skin injury via activation of EXTL3-PI3K-AKT signaling pathway (By similarity). In parallel, inhibits skin inflammation through the inhibition of inflammatory cytokines such as IL6 and TNF (PubMed:22727489). In pancreas, is able to permealize beta-cells membrane and stimulate their proliferation (PubMed:36240759).</text>
</comment>
<comment type="subunit">
    <molecule>Regenerating islet-derived protein 3-alpha 15 kDa form</molecule>
    <text evidence="2">Forms a hexameric membrane-permeabilizing oligomeric pore on membrane phospholipids. The hexamer is formed by three dimers related by helical symmetry. Forms filaments, filamentation traps pore complexes and limits damage to host cells. Interacts with EXTL3.</text>
</comment>
<comment type="subcellular location">
    <subcellularLocation>
        <location evidence="2">Secreted</location>
    </subcellularLocation>
    <text evidence="2">Found in the apical region of pancreatic acinar cells.</text>
</comment>
<comment type="tissue specificity">
    <text>Small intestine and pancreas.</text>
</comment>
<comment type="induction">
    <text evidence="5">IL17A induces its expression in primary keratinocytes and skin wounds.</text>
</comment>
<comment type="domain">
    <text evidence="4">Lacks the EPN motif and the presence of Gln instead of Glu at amino-acid position 114 may explain its inability to bind peptidoglycan.</text>
</comment>
<comment type="PTM">
    <text evidence="2">Proteolytic processing by trypsin removes an inhibitory N-terminal propeptide and is essential for peptidoglycan binding and antibacterial activity.</text>
</comment>
<comment type="disease">
    <text>Overexpressed during the acute phase of pancreatitis.</text>
</comment>
<sequence>MLPHLVLNSISWMLLSCLLFVFQVQGEDFQKEVPSPRTSCPMGYKAYRSHCYALVMTPKSWFQADLVCQKRPSGHLVSILSGGEASFVSSLVNGRVDNYQDIWIGLHDPTMGQQPNGGGWEWSNSDVLNYLNWDGDPSSTVNRGHCGSLTASSGFLKWGDYYCDGTLPFVCKFKQ</sequence>
<organism>
    <name type="scientific">Mus musculus</name>
    <name type="common">Mouse</name>
    <dbReference type="NCBI Taxonomy" id="10090"/>
    <lineage>
        <taxon>Eukaryota</taxon>
        <taxon>Metazoa</taxon>
        <taxon>Chordata</taxon>
        <taxon>Craniata</taxon>
        <taxon>Vertebrata</taxon>
        <taxon>Euteleostomi</taxon>
        <taxon>Mammalia</taxon>
        <taxon>Eutheria</taxon>
        <taxon>Euarchontoglires</taxon>
        <taxon>Glires</taxon>
        <taxon>Rodentia</taxon>
        <taxon>Myomorpha</taxon>
        <taxon>Muroidea</taxon>
        <taxon>Muridae</taxon>
        <taxon>Murinae</taxon>
        <taxon>Mus</taxon>
        <taxon>Mus</taxon>
    </lineage>
</organism>
<accession>O09037</accession>
<proteinExistence type="evidence at protein level"/>
<dbReference type="EMBL" id="D63356">
    <property type="protein sequence ID" value="BAA18925.1"/>
    <property type="molecule type" value="mRNA"/>
</dbReference>
<dbReference type="EMBL" id="D63357">
    <property type="protein sequence ID" value="BAA18926.1"/>
    <property type="molecule type" value="mRNA"/>
</dbReference>
<dbReference type="EMBL" id="D63358">
    <property type="protein sequence ID" value="BAA18927.1"/>
    <property type="molecule type" value="Genomic_DNA"/>
</dbReference>
<dbReference type="CCDS" id="CCDS20255.1"/>
<dbReference type="RefSeq" id="NP_035389.1">
    <property type="nucleotide sequence ID" value="NM_011259.1"/>
</dbReference>
<dbReference type="SMR" id="O09037"/>
<dbReference type="FunCoup" id="O09037">
    <property type="interactions" value="164"/>
</dbReference>
<dbReference type="STRING" id="10090.ENSMUSP00000098829"/>
<dbReference type="PaxDb" id="10090-ENSMUSP00000098829"/>
<dbReference type="PeptideAtlas" id="O09037"/>
<dbReference type="ProteomicsDB" id="255177"/>
<dbReference type="DNASU" id="19694"/>
<dbReference type="Ensembl" id="ENSMUST00000101272.3">
    <property type="protein sequence ID" value="ENSMUSP00000098829.2"/>
    <property type="gene ID" value="ENSMUSG00000079516.3"/>
</dbReference>
<dbReference type="GeneID" id="19694"/>
<dbReference type="KEGG" id="mmu:19694"/>
<dbReference type="UCSC" id="uc009cjy.1">
    <property type="organism name" value="mouse"/>
</dbReference>
<dbReference type="AGR" id="MGI:109408"/>
<dbReference type="CTD" id="5068"/>
<dbReference type="MGI" id="MGI:109408">
    <property type="gene designation" value="Reg3a"/>
</dbReference>
<dbReference type="VEuPathDB" id="HostDB:ENSMUSG00000079516"/>
<dbReference type="eggNOG" id="KOG4297">
    <property type="taxonomic scope" value="Eukaryota"/>
</dbReference>
<dbReference type="GeneTree" id="ENSGT00940000154447"/>
<dbReference type="HOGENOM" id="CLU_049894_18_0_1"/>
<dbReference type="InParanoid" id="O09037"/>
<dbReference type="OMA" id="YQDIWIG"/>
<dbReference type="OrthoDB" id="418245at2759"/>
<dbReference type="PhylomeDB" id="O09037"/>
<dbReference type="Reactome" id="R-MMU-6803157">
    <property type="pathway name" value="Antimicrobial peptides"/>
</dbReference>
<dbReference type="BioGRID-ORCS" id="19694">
    <property type="hits" value="2 hits in 77 CRISPR screens"/>
</dbReference>
<dbReference type="PRO" id="PR:O09037"/>
<dbReference type="Proteomes" id="UP000000589">
    <property type="component" value="Chromosome 6"/>
</dbReference>
<dbReference type="RNAct" id="O09037">
    <property type="molecule type" value="protein"/>
</dbReference>
<dbReference type="Bgee" id="ENSMUSG00000079516">
    <property type="expression patterns" value="Expressed in small intestine Peyer's patch and 17 other cell types or tissues"/>
</dbReference>
<dbReference type="ExpressionAtlas" id="O09037">
    <property type="expression patterns" value="baseline and differential"/>
</dbReference>
<dbReference type="GO" id="GO:0005576">
    <property type="term" value="C:extracellular region"/>
    <property type="evidence" value="ECO:0007669"/>
    <property type="project" value="UniProtKB-SubCell"/>
</dbReference>
<dbReference type="GO" id="GO:0030246">
    <property type="term" value="F:carbohydrate binding"/>
    <property type="evidence" value="ECO:0007669"/>
    <property type="project" value="UniProtKB-KW"/>
</dbReference>
<dbReference type="GO" id="GO:0046872">
    <property type="term" value="F:metal ion binding"/>
    <property type="evidence" value="ECO:0007669"/>
    <property type="project" value="UniProtKB-KW"/>
</dbReference>
<dbReference type="GO" id="GO:0006953">
    <property type="term" value="P:acute-phase response"/>
    <property type="evidence" value="ECO:0007669"/>
    <property type="project" value="UniProtKB-KW"/>
</dbReference>
<dbReference type="GO" id="GO:0045617">
    <property type="term" value="P:negative regulation of keratinocyte differentiation"/>
    <property type="evidence" value="ECO:0000314"/>
    <property type="project" value="UniProtKB"/>
</dbReference>
<dbReference type="GO" id="GO:0010838">
    <property type="term" value="P:positive regulation of keratinocyte proliferation"/>
    <property type="evidence" value="ECO:0000314"/>
    <property type="project" value="UniProtKB"/>
</dbReference>
<dbReference type="GO" id="GO:0090303">
    <property type="term" value="P:positive regulation of wound healing"/>
    <property type="evidence" value="ECO:0000314"/>
    <property type="project" value="UniProtKB"/>
</dbReference>
<dbReference type="FunFam" id="3.10.100.10:FF:000015">
    <property type="entry name" value="C-type lectin Cal"/>
    <property type="match status" value="1"/>
</dbReference>
<dbReference type="Gene3D" id="3.10.100.10">
    <property type="entry name" value="Mannose-Binding Protein A, subunit A"/>
    <property type="match status" value="1"/>
</dbReference>
<dbReference type="InterPro" id="IPR001304">
    <property type="entry name" value="C-type_lectin-like"/>
</dbReference>
<dbReference type="InterPro" id="IPR016186">
    <property type="entry name" value="C-type_lectin-like/link_sf"/>
</dbReference>
<dbReference type="InterPro" id="IPR050111">
    <property type="entry name" value="C-type_lectin/snaclec_domain"/>
</dbReference>
<dbReference type="InterPro" id="IPR018378">
    <property type="entry name" value="C-type_lectin_CS"/>
</dbReference>
<dbReference type="InterPro" id="IPR016187">
    <property type="entry name" value="CTDL_fold"/>
</dbReference>
<dbReference type="PANTHER" id="PTHR22803">
    <property type="entry name" value="MANNOSE, PHOSPHOLIPASE, LECTIN RECEPTOR RELATED"/>
    <property type="match status" value="1"/>
</dbReference>
<dbReference type="Pfam" id="PF00059">
    <property type="entry name" value="Lectin_C"/>
    <property type="match status" value="1"/>
</dbReference>
<dbReference type="PRINTS" id="PR01504">
    <property type="entry name" value="PNCREATITSAP"/>
</dbReference>
<dbReference type="SMART" id="SM00034">
    <property type="entry name" value="CLECT"/>
    <property type="match status" value="1"/>
</dbReference>
<dbReference type="SUPFAM" id="SSF56436">
    <property type="entry name" value="C-type lectin-like"/>
    <property type="match status" value="1"/>
</dbReference>
<dbReference type="PROSITE" id="PS00615">
    <property type="entry name" value="C_TYPE_LECTIN_1"/>
    <property type="match status" value="1"/>
</dbReference>
<dbReference type="PROSITE" id="PS50041">
    <property type="entry name" value="C_TYPE_LECTIN_2"/>
    <property type="match status" value="1"/>
</dbReference>
<gene>
    <name type="primary">Reg3a</name>
    <name type="synonym">Pap2</name>
</gene>
<evidence type="ECO:0000250" key="1"/>
<evidence type="ECO:0000250" key="2">
    <source>
        <dbReference type="UniProtKB" id="Q06141"/>
    </source>
</evidence>
<evidence type="ECO:0000255" key="3">
    <source>
        <dbReference type="PROSITE-ProRule" id="PRU00040"/>
    </source>
</evidence>
<evidence type="ECO:0000269" key="4">
    <source>
    </source>
</evidence>
<evidence type="ECO:0000269" key="5">
    <source>
    </source>
</evidence>
<evidence type="ECO:0000269" key="6">
    <source>
    </source>
</evidence>